<feature type="chain" id="PRO_0000360260" description="NAD(P)H-quinone oxidoreductase subunit 6, chloroplastic">
    <location>
        <begin position="1"/>
        <end position="176"/>
    </location>
</feature>
<feature type="transmembrane region" description="Helical" evidence="2">
    <location>
        <begin position="10"/>
        <end position="30"/>
    </location>
</feature>
<feature type="transmembrane region" description="Helical" evidence="2">
    <location>
        <begin position="32"/>
        <end position="52"/>
    </location>
</feature>
<feature type="transmembrane region" description="Helical" evidence="2">
    <location>
        <begin position="61"/>
        <end position="81"/>
    </location>
</feature>
<feature type="transmembrane region" description="Helical" evidence="2">
    <location>
        <begin position="105"/>
        <end position="125"/>
    </location>
</feature>
<feature type="transmembrane region" description="Helical" evidence="2">
    <location>
        <begin position="153"/>
        <end position="173"/>
    </location>
</feature>
<accession>A7Y3L7</accession>
<dbReference type="EC" id="7.1.1.-"/>
<dbReference type="EMBL" id="EU118126">
    <property type="protein sequence ID" value="ABV02404.1"/>
    <property type="molecule type" value="Genomic_DNA"/>
</dbReference>
<dbReference type="RefSeq" id="YP_001468364.1">
    <property type="nucleotide sequence ID" value="NC_009808.1"/>
</dbReference>
<dbReference type="SMR" id="A7Y3L7"/>
<dbReference type="GeneID" id="5601292"/>
<dbReference type="GO" id="GO:0009535">
    <property type="term" value="C:chloroplast thylakoid membrane"/>
    <property type="evidence" value="ECO:0007669"/>
    <property type="project" value="UniProtKB-SubCell"/>
</dbReference>
<dbReference type="GO" id="GO:0008137">
    <property type="term" value="F:NADH dehydrogenase (ubiquinone) activity"/>
    <property type="evidence" value="ECO:0007669"/>
    <property type="project" value="InterPro"/>
</dbReference>
<dbReference type="GO" id="GO:0048038">
    <property type="term" value="F:quinone binding"/>
    <property type="evidence" value="ECO:0007669"/>
    <property type="project" value="UniProtKB-KW"/>
</dbReference>
<dbReference type="FunFam" id="1.20.120.1200:FF:000002">
    <property type="entry name" value="NAD(P)H-quinone oxidoreductase subunit 6, chloroplastic"/>
    <property type="match status" value="1"/>
</dbReference>
<dbReference type="Gene3D" id="1.20.120.1200">
    <property type="entry name" value="NADH-ubiquinone/plastoquinone oxidoreductase chain 6, subunit NuoJ"/>
    <property type="match status" value="1"/>
</dbReference>
<dbReference type="InterPro" id="IPR050290">
    <property type="entry name" value="NAD(P)H-Q_Oxidoreduct_6"/>
</dbReference>
<dbReference type="InterPro" id="IPR001457">
    <property type="entry name" value="NADH_UbQ/plastoQ_OxRdtase_su6"/>
</dbReference>
<dbReference type="InterPro" id="IPR042106">
    <property type="entry name" value="Nuo/plastoQ_OxRdtase_6_NuoJ"/>
</dbReference>
<dbReference type="PANTHER" id="PTHR48479">
    <property type="entry name" value="NAD(P)H-QUINONE OXIDOREDUCTASE SUBUNIT 6, CHLOROPLASTIC"/>
    <property type="match status" value="1"/>
</dbReference>
<dbReference type="PANTHER" id="PTHR48479:SF1">
    <property type="entry name" value="NAD(P)H-QUINONE OXIDOREDUCTASE SUBUNIT 6, CHLOROPLASTIC"/>
    <property type="match status" value="1"/>
</dbReference>
<dbReference type="Pfam" id="PF00499">
    <property type="entry name" value="Oxidored_q3"/>
    <property type="match status" value="1"/>
</dbReference>
<proteinExistence type="inferred from homology"/>
<comment type="function">
    <text evidence="1">NDH shuttles electrons from NAD(P)H:plastoquinone, via FMN and iron-sulfur (Fe-S) centers, to quinones in the photosynthetic chain and possibly in a chloroplast respiratory chain. The immediate electron acceptor for the enzyme in this species is believed to be plastoquinone. Couples the redox reaction to proton translocation, and thus conserves the redox energy in a proton gradient (By similarity).</text>
</comment>
<comment type="catalytic activity">
    <reaction>
        <text>a plastoquinone + NADH + (n+1) H(+)(in) = a plastoquinol + NAD(+) + n H(+)(out)</text>
        <dbReference type="Rhea" id="RHEA:42608"/>
        <dbReference type="Rhea" id="RHEA-COMP:9561"/>
        <dbReference type="Rhea" id="RHEA-COMP:9562"/>
        <dbReference type="ChEBI" id="CHEBI:15378"/>
        <dbReference type="ChEBI" id="CHEBI:17757"/>
        <dbReference type="ChEBI" id="CHEBI:57540"/>
        <dbReference type="ChEBI" id="CHEBI:57945"/>
        <dbReference type="ChEBI" id="CHEBI:62192"/>
    </reaction>
</comment>
<comment type="catalytic activity">
    <reaction>
        <text>a plastoquinone + NADPH + (n+1) H(+)(in) = a plastoquinol + NADP(+) + n H(+)(out)</text>
        <dbReference type="Rhea" id="RHEA:42612"/>
        <dbReference type="Rhea" id="RHEA-COMP:9561"/>
        <dbReference type="Rhea" id="RHEA-COMP:9562"/>
        <dbReference type="ChEBI" id="CHEBI:15378"/>
        <dbReference type="ChEBI" id="CHEBI:17757"/>
        <dbReference type="ChEBI" id="CHEBI:57783"/>
        <dbReference type="ChEBI" id="CHEBI:58349"/>
        <dbReference type="ChEBI" id="CHEBI:62192"/>
    </reaction>
</comment>
<comment type="subunit">
    <text evidence="1">NDH is composed of at least 16 different subunits, 5 of which are encoded in the nucleus.</text>
</comment>
<comment type="subcellular location">
    <subcellularLocation>
        <location evidence="1">Plastid</location>
        <location evidence="1">Chloroplast thylakoid membrane</location>
        <topology evidence="1">Multi-pass membrane protein</topology>
    </subcellularLocation>
</comment>
<comment type="similarity">
    <text evidence="3">Belongs to the complex I subunit 6 family.</text>
</comment>
<reference key="1">
    <citation type="journal article" date="2007" name="BMC Plant Biol.">
        <title>Complete plastid genome sequences suggest strong selection for retention of photosynthetic genes in the parasitic plant genus Cuscuta.</title>
        <authorList>
            <person name="McNeal J.R."/>
            <person name="Kuehl J.V."/>
            <person name="Boore J.L."/>
            <person name="dePamphilis C.W."/>
        </authorList>
    </citation>
    <scope>NUCLEOTIDE SEQUENCE [LARGE SCALE GENOMIC DNA]</scope>
</reference>
<protein>
    <recommendedName>
        <fullName>NAD(P)H-quinone oxidoreductase subunit 6, chloroplastic</fullName>
        <ecNumber>7.1.1.-</ecNumber>
    </recommendedName>
    <alternativeName>
        <fullName>NAD(P)H dehydrogenase subunit 6</fullName>
    </alternativeName>
    <alternativeName>
        <fullName>NADH-plastoquinone oxidoreductase subunit 6</fullName>
    </alternativeName>
</protein>
<name>NU6C_IPOPU</name>
<sequence length="176" mass="19266">MDLPGPIHDFLLVFLGSGLILGSIGVVLFPNPIYSAFSLGLVLVCISLFYILSNSYFVAAAQLLIYVGAINVLILFAVMFLNGSEYSNDFPLWTLGDGITSQVCISLFISLISTILDTSWYGIIWTTRSNQIIEQDLISNSQQIGIHLSTDFFLPFELISIILLVALIGAIVIARQ</sequence>
<organism>
    <name type="scientific">Ipomoea purpurea</name>
    <name type="common">Common morning glory</name>
    <name type="synonym">Pharbitis purpurea</name>
    <dbReference type="NCBI Taxonomy" id="4121"/>
    <lineage>
        <taxon>Eukaryota</taxon>
        <taxon>Viridiplantae</taxon>
        <taxon>Streptophyta</taxon>
        <taxon>Embryophyta</taxon>
        <taxon>Tracheophyta</taxon>
        <taxon>Spermatophyta</taxon>
        <taxon>Magnoliopsida</taxon>
        <taxon>eudicotyledons</taxon>
        <taxon>Gunneridae</taxon>
        <taxon>Pentapetalae</taxon>
        <taxon>asterids</taxon>
        <taxon>lamiids</taxon>
        <taxon>Solanales</taxon>
        <taxon>Convolvulaceae</taxon>
        <taxon>Ipomoeeae</taxon>
        <taxon>Ipomoea</taxon>
    </lineage>
</organism>
<gene>
    <name type="primary">ndhG</name>
</gene>
<evidence type="ECO:0000250" key="1"/>
<evidence type="ECO:0000255" key="2"/>
<evidence type="ECO:0000305" key="3"/>
<keyword id="KW-0150">Chloroplast</keyword>
<keyword id="KW-0472">Membrane</keyword>
<keyword id="KW-0520">NAD</keyword>
<keyword id="KW-0521">NADP</keyword>
<keyword id="KW-0934">Plastid</keyword>
<keyword id="KW-0618">Plastoquinone</keyword>
<keyword id="KW-0874">Quinone</keyword>
<keyword id="KW-0793">Thylakoid</keyword>
<keyword id="KW-1278">Translocase</keyword>
<keyword id="KW-0812">Transmembrane</keyword>
<keyword id="KW-1133">Transmembrane helix</keyword>
<keyword id="KW-0813">Transport</keyword>
<geneLocation type="chloroplast"/>